<proteinExistence type="evidence at protein level"/>
<accession>P20018</accession>
<sequence length="141" mass="15271">VLSPADKNNVKSAWNAIGSHAGEHGAEALERMFLSFPPTKTYFPHFDLSHGSAQIKTHGKKVADALTNAVNHIDDMPGALSALSDLHAHKLRVDPVNFKLLSHCLLVTLASHHPAEFTPAVHASLDKFFAAVSTVLTSKYR</sequence>
<dbReference type="PIR" id="S06510">
    <property type="entry name" value="HALEIR"/>
</dbReference>
<dbReference type="SMR" id="P20018"/>
<dbReference type="GO" id="GO:0072562">
    <property type="term" value="C:blood microparticle"/>
    <property type="evidence" value="ECO:0007669"/>
    <property type="project" value="TreeGrafter"/>
</dbReference>
<dbReference type="GO" id="GO:0031838">
    <property type="term" value="C:haptoglobin-hemoglobin complex"/>
    <property type="evidence" value="ECO:0007669"/>
    <property type="project" value="TreeGrafter"/>
</dbReference>
<dbReference type="GO" id="GO:0005833">
    <property type="term" value="C:hemoglobin complex"/>
    <property type="evidence" value="ECO:0007669"/>
    <property type="project" value="InterPro"/>
</dbReference>
<dbReference type="GO" id="GO:0031720">
    <property type="term" value="F:haptoglobin binding"/>
    <property type="evidence" value="ECO:0007669"/>
    <property type="project" value="TreeGrafter"/>
</dbReference>
<dbReference type="GO" id="GO:0020037">
    <property type="term" value="F:heme binding"/>
    <property type="evidence" value="ECO:0007669"/>
    <property type="project" value="InterPro"/>
</dbReference>
<dbReference type="GO" id="GO:0005506">
    <property type="term" value="F:iron ion binding"/>
    <property type="evidence" value="ECO:0007669"/>
    <property type="project" value="InterPro"/>
</dbReference>
<dbReference type="GO" id="GO:0043177">
    <property type="term" value="F:organic acid binding"/>
    <property type="evidence" value="ECO:0007669"/>
    <property type="project" value="TreeGrafter"/>
</dbReference>
<dbReference type="GO" id="GO:0019825">
    <property type="term" value="F:oxygen binding"/>
    <property type="evidence" value="ECO:0007669"/>
    <property type="project" value="InterPro"/>
</dbReference>
<dbReference type="GO" id="GO:0005344">
    <property type="term" value="F:oxygen carrier activity"/>
    <property type="evidence" value="ECO:0007669"/>
    <property type="project" value="UniProtKB-KW"/>
</dbReference>
<dbReference type="GO" id="GO:0004601">
    <property type="term" value="F:peroxidase activity"/>
    <property type="evidence" value="ECO:0007669"/>
    <property type="project" value="TreeGrafter"/>
</dbReference>
<dbReference type="GO" id="GO:0042744">
    <property type="term" value="P:hydrogen peroxide catabolic process"/>
    <property type="evidence" value="ECO:0007669"/>
    <property type="project" value="TreeGrafter"/>
</dbReference>
<dbReference type="CDD" id="cd08927">
    <property type="entry name" value="Hb-alpha-like"/>
    <property type="match status" value="1"/>
</dbReference>
<dbReference type="FunFam" id="1.10.490.10:FF:000002">
    <property type="entry name" value="Hemoglobin subunit alpha"/>
    <property type="match status" value="1"/>
</dbReference>
<dbReference type="Gene3D" id="1.10.490.10">
    <property type="entry name" value="Globins"/>
    <property type="match status" value="1"/>
</dbReference>
<dbReference type="InterPro" id="IPR000971">
    <property type="entry name" value="Globin"/>
</dbReference>
<dbReference type="InterPro" id="IPR009050">
    <property type="entry name" value="Globin-like_sf"/>
</dbReference>
<dbReference type="InterPro" id="IPR012292">
    <property type="entry name" value="Globin/Proto"/>
</dbReference>
<dbReference type="InterPro" id="IPR002338">
    <property type="entry name" value="Hemoglobin_a-typ"/>
</dbReference>
<dbReference type="InterPro" id="IPR050056">
    <property type="entry name" value="Hemoglobin_oxygen_transport"/>
</dbReference>
<dbReference type="InterPro" id="IPR002339">
    <property type="entry name" value="Hemoglobin_pi"/>
</dbReference>
<dbReference type="PANTHER" id="PTHR11442">
    <property type="entry name" value="HEMOGLOBIN FAMILY MEMBER"/>
    <property type="match status" value="1"/>
</dbReference>
<dbReference type="PANTHER" id="PTHR11442:SF48">
    <property type="entry name" value="HEMOGLOBIN SUBUNIT ALPHA"/>
    <property type="match status" value="1"/>
</dbReference>
<dbReference type="Pfam" id="PF00042">
    <property type="entry name" value="Globin"/>
    <property type="match status" value="1"/>
</dbReference>
<dbReference type="PRINTS" id="PR00612">
    <property type="entry name" value="ALPHAHAEM"/>
</dbReference>
<dbReference type="PRINTS" id="PR00815">
    <property type="entry name" value="PIHAEM"/>
</dbReference>
<dbReference type="SUPFAM" id="SSF46458">
    <property type="entry name" value="Globin-like"/>
    <property type="match status" value="1"/>
</dbReference>
<dbReference type="PROSITE" id="PS01033">
    <property type="entry name" value="GLOBIN"/>
    <property type="match status" value="1"/>
</dbReference>
<protein>
    <recommendedName>
        <fullName>Hemoglobin subunit alpha-1</fullName>
    </recommendedName>
    <alternativeName>
        <fullName>Alpha-1-globin</fullName>
    </alternativeName>
    <alternativeName>
        <fullName>Hemoglobin alpha-1 chain</fullName>
    </alternativeName>
    <alternativeName>
        <fullName>Hemoglobin alpha-I chain</fullName>
    </alternativeName>
</protein>
<organism>
    <name type="scientific">Varecia variegata</name>
    <name type="common">Black-and-white ruffed lemur</name>
    <name type="synonym">Lemur variegatus</name>
    <dbReference type="NCBI Taxonomy" id="9455"/>
    <lineage>
        <taxon>Eukaryota</taxon>
        <taxon>Metazoa</taxon>
        <taxon>Chordata</taxon>
        <taxon>Craniata</taxon>
        <taxon>Vertebrata</taxon>
        <taxon>Euteleostomi</taxon>
        <taxon>Mammalia</taxon>
        <taxon>Eutheria</taxon>
        <taxon>Euarchontoglires</taxon>
        <taxon>Primates</taxon>
        <taxon>Strepsirrhini</taxon>
        <taxon>Lemuriformes</taxon>
        <taxon>Lemuridae</taxon>
        <taxon>Varecia</taxon>
    </lineage>
</organism>
<evidence type="ECO:0000255" key="1">
    <source>
        <dbReference type="PROSITE-ProRule" id="PRU00238"/>
    </source>
</evidence>
<keyword id="KW-0903">Direct protein sequencing</keyword>
<keyword id="KW-0349">Heme</keyword>
<keyword id="KW-0408">Iron</keyword>
<keyword id="KW-0479">Metal-binding</keyword>
<keyword id="KW-0561">Oxygen transport</keyword>
<keyword id="KW-0813">Transport</keyword>
<comment type="function">
    <text>Involved in oxygen transport from the lung to the various peripheral tissues.</text>
</comment>
<comment type="subunit">
    <text>Heterotetramer of two alpha chains and two beta chains.</text>
</comment>
<comment type="tissue specificity">
    <text>Red blood cells.</text>
</comment>
<comment type="similarity">
    <text evidence="1">Belongs to the globin family.</text>
</comment>
<name>HBA1_VARVI</name>
<feature type="chain" id="PRO_0000052665" description="Hemoglobin subunit alpha-1">
    <location>
        <begin position="1"/>
        <end position="141"/>
    </location>
</feature>
<feature type="domain" description="Globin" evidence="1">
    <location>
        <begin position="1"/>
        <end position="141"/>
    </location>
</feature>
<feature type="binding site" evidence="1">
    <location>
        <position position="58"/>
    </location>
    <ligand>
        <name>O2</name>
        <dbReference type="ChEBI" id="CHEBI:15379"/>
    </ligand>
</feature>
<feature type="binding site" description="proximal binding residue" evidence="1">
    <location>
        <position position="87"/>
    </location>
    <ligand>
        <name>heme b</name>
        <dbReference type="ChEBI" id="CHEBI:60344"/>
    </ligand>
    <ligandPart>
        <name>Fe</name>
        <dbReference type="ChEBI" id="CHEBI:18248"/>
    </ligandPart>
</feature>
<reference key="1">
    <citation type="journal article" date="1986" name="Biochim. Biophys. Acta">
        <title>Prosimian hemoglobins. III. The primary structures of the duplicated alpha-globin chains of Lemur variegatus.</title>
        <authorList>
            <person name="Coppenhaver D.H."/>
            <person name="Buettner-Janusch J."/>
            <person name="Ehrhardt M.M."/>
            <person name="Duffy L.K."/>
        </authorList>
    </citation>
    <scope>PROTEIN SEQUENCE</scope>
</reference>